<feature type="chain" id="PRO_0000106531" description="Tail fiber protein">
    <location>
        <begin position="1"/>
        <end position="553"/>
    </location>
</feature>
<feature type="region of interest" description="Disordered" evidence="1">
    <location>
        <begin position="180"/>
        <end position="204"/>
    </location>
</feature>
<feature type="region of interest" description="Disordered" evidence="1">
    <location>
        <begin position="224"/>
        <end position="261"/>
    </location>
</feature>
<feature type="compositionally biased region" description="Polar residues" evidence="1">
    <location>
        <begin position="187"/>
        <end position="197"/>
    </location>
</feature>
<feature type="compositionally biased region" description="Low complexity" evidence="1">
    <location>
        <begin position="234"/>
        <end position="254"/>
    </location>
</feature>
<feature type="strand" evidence="8">
    <location>
        <begin position="10"/>
        <end position="12"/>
    </location>
</feature>
<feature type="strand" evidence="7">
    <location>
        <begin position="19"/>
        <end position="21"/>
    </location>
</feature>
<feature type="helix" evidence="8">
    <location>
        <begin position="29"/>
        <end position="31"/>
    </location>
</feature>
<feature type="strand" evidence="8">
    <location>
        <begin position="35"/>
        <end position="37"/>
    </location>
</feature>
<feature type="strand" evidence="6">
    <location>
        <begin position="38"/>
        <end position="40"/>
    </location>
</feature>
<feature type="turn" evidence="8">
    <location>
        <begin position="46"/>
        <end position="48"/>
    </location>
</feature>
<feature type="strand" evidence="6">
    <location>
        <begin position="51"/>
        <end position="54"/>
    </location>
</feature>
<feature type="strand" evidence="7">
    <location>
        <begin position="57"/>
        <end position="62"/>
    </location>
</feature>
<feature type="helix" evidence="8">
    <location>
        <begin position="66"/>
        <end position="68"/>
    </location>
</feature>
<feature type="strand" evidence="8">
    <location>
        <begin position="72"/>
        <end position="74"/>
    </location>
</feature>
<feature type="strand" evidence="8">
    <location>
        <begin position="81"/>
        <end position="83"/>
    </location>
</feature>
<feature type="strand" evidence="8">
    <location>
        <begin position="90"/>
        <end position="92"/>
    </location>
</feature>
<feature type="helix" evidence="8">
    <location>
        <begin position="96"/>
        <end position="116"/>
    </location>
</feature>
<feature type="strand" evidence="8">
    <location>
        <begin position="122"/>
        <end position="124"/>
    </location>
</feature>
<feature type="turn" evidence="8">
    <location>
        <begin position="125"/>
        <end position="127"/>
    </location>
</feature>
<feature type="strand" evidence="8">
    <location>
        <begin position="128"/>
        <end position="130"/>
    </location>
</feature>
<feature type="strand" evidence="7">
    <location>
        <begin position="136"/>
        <end position="138"/>
    </location>
</feature>
<feature type="helix" evidence="8">
    <location>
        <begin position="151"/>
        <end position="153"/>
    </location>
</feature>
<feature type="helix" evidence="8">
    <location>
        <begin position="155"/>
        <end position="164"/>
    </location>
</feature>
<feature type="strand" evidence="5">
    <location>
        <begin position="373"/>
        <end position="379"/>
    </location>
</feature>
<feature type="strand" evidence="5">
    <location>
        <begin position="384"/>
        <end position="390"/>
    </location>
</feature>
<feature type="strand" evidence="5">
    <location>
        <begin position="393"/>
        <end position="400"/>
    </location>
</feature>
<feature type="strand" evidence="5">
    <location>
        <begin position="402"/>
        <end position="404"/>
    </location>
</feature>
<feature type="strand" evidence="5">
    <location>
        <begin position="408"/>
        <end position="412"/>
    </location>
</feature>
<feature type="turn" evidence="5">
    <location>
        <begin position="413"/>
        <end position="416"/>
    </location>
</feature>
<feature type="strand" evidence="5">
    <location>
        <begin position="417"/>
        <end position="421"/>
    </location>
</feature>
<feature type="strand" evidence="5">
    <location>
        <begin position="423"/>
        <end position="430"/>
    </location>
</feature>
<feature type="strand" evidence="5">
    <location>
        <begin position="432"/>
        <end position="434"/>
    </location>
</feature>
<feature type="strand" evidence="5">
    <location>
        <begin position="437"/>
        <end position="439"/>
    </location>
</feature>
<feature type="helix" evidence="5">
    <location>
        <begin position="448"/>
        <end position="450"/>
    </location>
</feature>
<feature type="helix" evidence="5">
    <location>
        <begin position="455"/>
        <end position="462"/>
    </location>
</feature>
<feature type="strand" evidence="5">
    <location>
        <begin position="470"/>
        <end position="476"/>
    </location>
</feature>
<feature type="strand" evidence="5">
    <location>
        <begin position="483"/>
        <end position="485"/>
    </location>
</feature>
<feature type="strand" evidence="5">
    <location>
        <begin position="494"/>
        <end position="498"/>
    </location>
</feature>
<feature type="helix" evidence="5">
    <location>
        <begin position="500"/>
        <end position="502"/>
    </location>
</feature>
<feature type="strand" evidence="5">
    <location>
        <begin position="504"/>
        <end position="508"/>
    </location>
</feature>
<feature type="strand" evidence="5">
    <location>
        <begin position="511"/>
        <end position="517"/>
    </location>
</feature>
<feature type="strand" evidence="5">
    <location>
        <begin position="522"/>
        <end position="529"/>
    </location>
</feature>
<feature type="turn" evidence="5">
    <location>
        <begin position="530"/>
        <end position="533"/>
    </location>
</feature>
<feature type="strand" evidence="5">
    <location>
        <begin position="534"/>
        <end position="542"/>
    </location>
</feature>
<feature type="strand" evidence="5">
    <location>
        <begin position="547"/>
        <end position="551"/>
    </location>
</feature>
<dbReference type="EMBL" id="V01146">
    <property type="protein sequence ID" value="CAA24435.1"/>
    <property type="molecule type" value="Genomic_DNA"/>
</dbReference>
<dbReference type="PIR" id="A04373">
    <property type="entry name" value="TLBPF7"/>
</dbReference>
<dbReference type="RefSeq" id="NP_042005.1">
    <property type="nucleotide sequence ID" value="NC_001604.1"/>
</dbReference>
<dbReference type="PDB" id="4A0T">
    <property type="method" value="X-ray"/>
    <property type="resolution" value="1.90 A"/>
    <property type="chains" value="A/B/C=371-553"/>
</dbReference>
<dbReference type="PDB" id="4A0U">
    <property type="method" value="X-ray"/>
    <property type="resolution" value="2.00 A"/>
    <property type="chains" value="A/B/C=371-553"/>
</dbReference>
<dbReference type="PDB" id="7BOZ">
    <property type="method" value="EM"/>
    <property type="resolution" value="3.80 A"/>
    <property type="chains" value="a/b/c/d/e/f/g/h/i/j/k/l/m/n/o/p/q/r=1-553"/>
</dbReference>
<dbReference type="PDB" id="7EY7">
    <property type="method" value="EM"/>
    <property type="resolution" value="4.30 A"/>
    <property type="chains" value="a/b/c/d/e/f/g/h/i/j/k/l/m/n/o/p/q/r=1-553"/>
</dbReference>
<dbReference type="PDB" id="7EY9">
    <property type="method" value="EM"/>
    <property type="resolution" value="3.40 A"/>
    <property type="chains" value="a/b/c/d/e/f/g/h/i/j/k/l/m/n/o/p/q/r=1-553"/>
</dbReference>
<dbReference type="PDB" id="8DSP">
    <property type="method" value="EM"/>
    <property type="resolution" value="3.30 A"/>
    <property type="chains" value="C/E/F=4-167"/>
</dbReference>
<dbReference type="PDB" id="8E4G">
    <property type="method" value="EM"/>
    <property type="resolution" value="3.20 A"/>
    <property type="chains" value="O/Y/g=1-165"/>
</dbReference>
<dbReference type="PDB" id="9JYZ">
    <property type="method" value="EM"/>
    <property type="resolution" value="2.70 A"/>
    <property type="chains" value="A/B/C/D/E/F/G/H/I/J/K/L/M/N/O/a/b/c=1-553"/>
</dbReference>
<dbReference type="PDB" id="9JZ0">
    <property type="method" value="EM"/>
    <property type="resolution" value="3.50 A"/>
    <property type="chains" value="a/b/c/d/e/f/g/h/i/j/k/l/m/n/o/p/q/r=1-553"/>
</dbReference>
<dbReference type="PDBsum" id="4A0T"/>
<dbReference type="PDBsum" id="4A0U"/>
<dbReference type="PDBsum" id="7BOZ"/>
<dbReference type="PDBsum" id="7EY7"/>
<dbReference type="PDBsum" id="7EY9"/>
<dbReference type="PDBsum" id="8DSP"/>
<dbReference type="PDBsum" id="8E4G"/>
<dbReference type="PDBsum" id="9JYZ"/>
<dbReference type="PDBsum" id="9JZ0"/>
<dbReference type="EMDB" id="EMD-30137"/>
<dbReference type="EMDB" id="EMD-61910"/>
<dbReference type="EMDB" id="EMD-61911"/>
<dbReference type="SMR" id="P03748"/>
<dbReference type="DIP" id="DIP-41671N"/>
<dbReference type="MINT" id="P03748"/>
<dbReference type="KEGG" id="vg:1261023"/>
<dbReference type="OrthoDB" id="1721at10239"/>
<dbReference type="EvolutionaryTrace" id="P03748"/>
<dbReference type="Proteomes" id="UP000000840">
    <property type="component" value="Genome"/>
</dbReference>
<dbReference type="GO" id="GO:0098024">
    <property type="term" value="C:virus tail, fiber"/>
    <property type="evidence" value="ECO:0000314"/>
    <property type="project" value="UniProtKB"/>
</dbReference>
<dbReference type="GO" id="GO:0042802">
    <property type="term" value="F:identical protein binding"/>
    <property type="evidence" value="ECO:0000353"/>
    <property type="project" value="IntAct"/>
</dbReference>
<dbReference type="GO" id="GO:0098671">
    <property type="term" value="P:adhesion receptor-mediated virion attachment to host cell"/>
    <property type="evidence" value="ECO:0007669"/>
    <property type="project" value="UniProtKB-KW"/>
</dbReference>
<dbReference type="GO" id="GO:0046718">
    <property type="term" value="P:symbiont entry into host cell"/>
    <property type="evidence" value="ECO:0007669"/>
    <property type="project" value="UniProtKB-KW"/>
</dbReference>
<dbReference type="GO" id="GO:0019062">
    <property type="term" value="P:virion attachment to host cell"/>
    <property type="evidence" value="ECO:0000314"/>
    <property type="project" value="UniProtKB"/>
</dbReference>
<dbReference type="Gene3D" id="2.60.320.30">
    <property type="match status" value="1"/>
</dbReference>
<dbReference type="Gene3D" id="6.20.70.20">
    <property type="match status" value="1"/>
</dbReference>
<dbReference type="Gene3D" id="6.20.80.10">
    <property type="match status" value="1"/>
</dbReference>
<dbReference type="InterPro" id="IPR048388">
    <property type="entry name" value="Gp37_trimer"/>
</dbReference>
<dbReference type="InterPro" id="IPR022246">
    <property type="entry name" value="Phage_T7_Gp17_C"/>
</dbReference>
<dbReference type="InterPro" id="IPR005604">
    <property type="entry name" value="Phage_T7_tail_fibre-like_N"/>
</dbReference>
<dbReference type="Pfam" id="PF12604">
    <property type="entry name" value="gp37_C"/>
    <property type="match status" value="1"/>
</dbReference>
<dbReference type="Pfam" id="PF20744">
    <property type="entry name" value="gp37_trimer"/>
    <property type="match status" value="1"/>
</dbReference>
<dbReference type="Pfam" id="PF03906">
    <property type="entry name" value="Phage_T7_tail"/>
    <property type="match status" value="1"/>
</dbReference>
<keyword id="KW-0002">3D-structure</keyword>
<keyword id="KW-0945">Host-virus interaction</keyword>
<keyword id="KW-0426">Late protein</keyword>
<keyword id="KW-1185">Reference proteome</keyword>
<keyword id="KW-1233">Viral attachment to host adhesion receptor</keyword>
<keyword id="KW-1161">Viral attachment to host cell</keyword>
<keyword id="KW-1230">Viral tail fiber protein</keyword>
<keyword id="KW-1227">Viral tail protein</keyword>
<keyword id="KW-0946">Virion</keyword>
<keyword id="KW-1160">Virus entry into host cell</keyword>
<comment type="function">
    <text evidence="2">Structural component of the short non-contractile tail. The tail comprises six fibers made of gp17 trimers, 2 nm in diameter and 32 nm in length. May attach to host lipopolysaccharides (LPS) to mediate primary attachment to the host cell.</text>
</comment>
<comment type="subunit">
    <text evidence="2 3">Homotrimer (PubMed:3259634). Interacts with tail components gp11 and gp12 (PubMed:23884409).</text>
</comment>
<comment type="interaction">
    <interactant intactId="EBI-8665096">
        <id>P03748</id>
    </interactant>
    <interactant intactId="EBI-8665096">
        <id>P03748</id>
        <label>17</label>
    </interactant>
    <organismsDiffer>false</organismsDiffer>
    <experiments>2</experiments>
</comment>
<comment type="subcellular location">
    <subcellularLocation>
        <location>Virion</location>
    </subcellularLocation>
</comment>
<comment type="similarity">
    <text evidence="4">Belongs to the Teseptimavirus fiber family.</text>
</comment>
<protein>
    <recommendedName>
        <fullName>Tail fiber protein</fullName>
    </recommendedName>
    <alternativeName>
        <fullName>Gene product 17</fullName>
        <shortName>Gp17</shortName>
    </alternativeName>
    <alternativeName>
        <fullName>Tail fiber protein gp17</fullName>
    </alternativeName>
</protein>
<name>FIBER_BPT7</name>
<gene>
    <name type="ordered locus">17</name>
</gene>
<organism>
    <name type="scientific">Escherichia phage T7</name>
    <name type="common">Bacteriophage T7</name>
    <dbReference type="NCBI Taxonomy" id="10760"/>
    <lineage>
        <taxon>Viruses</taxon>
        <taxon>Duplodnaviria</taxon>
        <taxon>Heunggongvirae</taxon>
        <taxon>Uroviricota</taxon>
        <taxon>Caudoviricetes</taxon>
        <taxon>Autographiviridae</taxon>
        <taxon>Studiervirinae</taxon>
        <taxon>Teseptimavirus</taxon>
        <taxon>Teseptimavirus T7</taxon>
    </lineage>
</organism>
<accession>P03748</accession>
<proteinExistence type="evidence at protein level"/>
<reference key="1">
    <citation type="journal article" date="1983" name="J. Mol. Biol.">
        <title>Complete nucleotide sequence of bacteriophage T7 DNA and the locations of T7 genetic elements.</title>
        <authorList>
            <person name="Dunn J.J."/>
            <person name="Studier F.W."/>
        </authorList>
    </citation>
    <scope>NUCLEOTIDE SEQUENCE [LARGE SCALE GENOMIC DNA]</scope>
</reference>
<reference key="2">
    <citation type="journal article" date="1988" name="J. Mol. Biol.">
        <title>Molecular substructure of a viral receptor-recognition protein. The gp17 tail-fiber of bacteriophage T7.</title>
        <authorList>
            <person name="Steven A.C."/>
            <person name="Trus B.L."/>
            <person name="Maizel J.V."/>
            <person name="Unser M."/>
            <person name="Parry D.A."/>
            <person name="Wall J.S."/>
            <person name="Hainfeld J.F."/>
            <person name="Studier F.W."/>
        </authorList>
    </citation>
    <scope>SUBUNIT</scope>
</reference>
<reference key="3">
    <citation type="journal article" date="2013" name="J. Biol. Chem.">
        <title>Structural characterization of the bacteriophage T7 tail machinery.</title>
        <authorList>
            <person name="Cuervo A."/>
            <person name="Pulido-Cid M."/>
            <person name="Chagoyen M."/>
            <person name="Arranz R."/>
            <person name="Gonzalez-Garcia V.A."/>
            <person name="Garcia-Doval C."/>
            <person name="Caston J.R."/>
            <person name="Valpuesta J.M."/>
            <person name="van Raaij M.J."/>
            <person name="Martin-Benito J."/>
            <person name="Carrascosa J.L."/>
        </authorList>
    </citation>
    <scope>FUNCTION</scope>
    <scope>INTERACTION WITH GP11 AND GP12</scope>
</reference>
<reference key="4">
    <citation type="journal article" date="2012" name="Proc. Natl. Acad. Sci. U.S.A.">
        <title>Structure of the receptor-binding carboxy-terminal domain of bacteriophage T7 tail fibers.</title>
        <authorList>
            <person name="Garcia-Doval C."/>
            <person name="van Raaij M.J."/>
        </authorList>
    </citation>
    <scope>X-RAY CRYSTALLOGRAPHY (1.9 ANGSTROMS) OF 371-553</scope>
</reference>
<evidence type="ECO:0000256" key="1">
    <source>
        <dbReference type="SAM" id="MobiDB-lite"/>
    </source>
</evidence>
<evidence type="ECO:0000269" key="2">
    <source>
    </source>
</evidence>
<evidence type="ECO:0000269" key="3">
    <source>
    </source>
</evidence>
<evidence type="ECO:0000305" key="4"/>
<evidence type="ECO:0007829" key="5">
    <source>
        <dbReference type="PDB" id="4A0T"/>
    </source>
</evidence>
<evidence type="ECO:0007829" key="6">
    <source>
        <dbReference type="PDB" id="7EY9"/>
    </source>
</evidence>
<evidence type="ECO:0007829" key="7">
    <source>
        <dbReference type="PDB" id="8DSP"/>
    </source>
</evidence>
<evidence type="ECO:0007829" key="8">
    <source>
        <dbReference type="PDB" id="8E4G"/>
    </source>
</evidence>
<sequence length="553" mass="61572">MANVIKTVLTYQLDGSNRDFNIPFEYLARKFVVVTLIGVDRKVLTINTDYRFATRTTISLTKAWGPADGYTTIELRRVTSTTDRLVDFTDGSILRAYDLNVAQIQTMHVAEEARDLTTDTIGVNNDGHLDARGRRIVNLANAVDDRDAVPFGQLKTMNQNSWQARNEALQFRNEAETFRNQAEGFKNESSTNATNTKQWRDETKGFRDEAKRFKNTAGQYATSAGNSASAAHQSEVNAENSATASANSAHLAEQQADRAEREADKLENYNGLAGAIDKVDGTNVYWKGNIHANGRLYMTTNGFDCGQYQQFFGGVTNRYSVMEWGDENGWLMYVQRREWTTAIGGNIQLVVNGQIITQGGAMTGQLKLQNGHVLQLESASDKAHYILSKDGNRNNWYIGRGSDNNNDCTFHSYVHGTTLTLKQDYAVVNKHFHVGQAVVATDGNIQGTKWGGKWLDAYLRDSFVAKSKAWTQVWSGSAGGGVSVTVSQDLRFRNIWIKCANNSWNFFRTGPDGIYFIASDGGWLRFQIHSNGLGFKNIADSRSVPNAIMVENE</sequence>
<organismHost>
    <name type="scientific">Escherichia coli</name>
    <dbReference type="NCBI Taxonomy" id="562"/>
</organismHost>